<accession>Q7ZXG7</accession>
<protein>
    <recommendedName>
        <fullName>Guanidinoacetate N-methyltransferase A</fullName>
        <ecNumber>2.1.1.2</ecNumber>
    </recommendedName>
</protein>
<gene>
    <name type="primary">gamt-a</name>
</gene>
<comment type="catalytic activity">
    <reaction evidence="3">
        <text>guanidinoacetate + S-adenosyl-L-methionine = creatine + S-adenosyl-L-homocysteine + H(+)</text>
        <dbReference type="Rhea" id="RHEA:10656"/>
        <dbReference type="ChEBI" id="CHEBI:15378"/>
        <dbReference type="ChEBI" id="CHEBI:57742"/>
        <dbReference type="ChEBI" id="CHEBI:57856"/>
        <dbReference type="ChEBI" id="CHEBI:57947"/>
        <dbReference type="ChEBI" id="CHEBI:59789"/>
        <dbReference type="EC" id="2.1.1.2"/>
    </reaction>
</comment>
<comment type="pathway">
    <text>Amine and polyamine biosynthesis; creatine biosynthesis; creatine from L-arginine and glycine: step 2/2.</text>
</comment>
<comment type="subunit">
    <text evidence="1">Monomer.</text>
</comment>
<comment type="similarity">
    <text evidence="3">Belongs to the class I-like SAM-binding methyltransferase superfamily. RMT2 methyltransferase family.</text>
</comment>
<evidence type="ECO:0000250" key="1"/>
<evidence type="ECO:0000250" key="2">
    <source>
        <dbReference type="UniProtKB" id="P10868"/>
    </source>
</evidence>
<evidence type="ECO:0000255" key="3">
    <source>
        <dbReference type="PROSITE-ProRule" id="PRU00892"/>
    </source>
</evidence>
<sequence length="233" mass="26661">MSSDKIFAEGESCKSAWHDATAGYDETDTHLEIMGKPVMERWETPYMHSLATVAASKGGRVLEIGFGMAIAATKLEEYNIEEHWIIECNDGVFKRLQEWATKQPHKIVPLKGLWEEVVPTLPDGHFDGILYDTYPLSEETWHTHQFNFIKSHAYRLLKPGGVLTYCNLTSWGELLKTKYNDIEKMFKETQTPQLVDAGFKSENISTTVMDLVPPEDCRYYSFKKMITPTITKV</sequence>
<organism>
    <name type="scientific">Xenopus laevis</name>
    <name type="common">African clawed frog</name>
    <dbReference type="NCBI Taxonomy" id="8355"/>
    <lineage>
        <taxon>Eukaryota</taxon>
        <taxon>Metazoa</taxon>
        <taxon>Chordata</taxon>
        <taxon>Craniata</taxon>
        <taxon>Vertebrata</taxon>
        <taxon>Euteleostomi</taxon>
        <taxon>Amphibia</taxon>
        <taxon>Batrachia</taxon>
        <taxon>Anura</taxon>
        <taxon>Pipoidea</taxon>
        <taxon>Pipidae</taxon>
        <taxon>Xenopodinae</taxon>
        <taxon>Xenopus</taxon>
        <taxon>Xenopus</taxon>
    </lineage>
</organism>
<keyword id="KW-0489">Methyltransferase</keyword>
<keyword id="KW-1185">Reference proteome</keyword>
<keyword id="KW-0949">S-adenosyl-L-methionine</keyword>
<keyword id="KW-0808">Transferase</keyword>
<proteinExistence type="evidence at transcript level"/>
<feature type="chain" id="PRO_0000228966" description="Guanidinoacetate N-methyltransferase A">
    <location>
        <begin position="1"/>
        <end position="233"/>
    </location>
</feature>
<feature type="domain" description="RMT2" evidence="3">
    <location>
        <begin position="1"/>
        <end position="233"/>
    </location>
</feature>
<feature type="binding site" evidence="3">
    <location>
        <position position="17"/>
    </location>
    <ligand>
        <name>S-adenosyl-L-methionine</name>
        <dbReference type="ChEBI" id="CHEBI:59789"/>
    </ligand>
</feature>
<feature type="binding site" evidence="2 3">
    <location>
        <position position="39"/>
    </location>
    <ligand>
        <name>guanidinoacetate</name>
        <dbReference type="ChEBI" id="CHEBI:57742"/>
    </ligand>
</feature>
<feature type="binding site" evidence="2 3">
    <location>
        <position position="43"/>
    </location>
    <ligand>
        <name>guanidinoacetate</name>
        <dbReference type="ChEBI" id="CHEBI:57742"/>
    </ligand>
</feature>
<feature type="binding site" evidence="3">
    <location>
        <position position="47"/>
    </location>
    <ligand>
        <name>S-adenosyl-L-methionine</name>
        <dbReference type="ChEBI" id="CHEBI:59789"/>
    </ligand>
</feature>
<feature type="binding site" evidence="3">
    <location>
        <begin position="66"/>
        <end position="71"/>
    </location>
    <ligand>
        <name>S-adenosyl-L-methionine</name>
        <dbReference type="ChEBI" id="CHEBI:59789"/>
    </ligand>
</feature>
<feature type="binding site" evidence="3">
    <location>
        <begin position="87"/>
        <end position="89"/>
    </location>
    <ligand>
        <name>S-adenosyl-L-methionine</name>
        <dbReference type="ChEBI" id="CHEBI:59789"/>
    </ligand>
</feature>
<feature type="binding site" evidence="3">
    <location>
        <begin position="114"/>
        <end position="115"/>
    </location>
    <ligand>
        <name>S-adenosyl-L-methionine</name>
        <dbReference type="ChEBI" id="CHEBI:59789"/>
    </ligand>
</feature>
<feature type="binding site" evidence="2">
    <location>
        <position position="132"/>
    </location>
    <ligand>
        <name>guanidinoacetate</name>
        <dbReference type="ChEBI" id="CHEBI:57742"/>
    </ligand>
</feature>
<feature type="binding site" evidence="3">
    <location>
        <position position="132"/>
    </location>
    <ligand>
        <name>S-adenosyl-L-methionine</name>
        <dbReference type="ChEBI" id="CHEBI:59789"/>
    </ligand>
</feature>
<feature type="binding site" evidence="2">
    <location>
        <begin position="168"/>
        <end position="169"/>
    </location>
    <ligand>
        <name>guanidinoacetate</name>
        <dbReference type="ChEBI" id="CHEBI:57742"/>
    </ligand>
</feature>
<reference key="1">
    <citation type="submission" date="2003-01" db="EMBL/GenBank/DDBJ databases">
        <authorList>
            <consortium name="NIH - Xenopus Gene Collection (XGC) project"/>
        </authorList>
    </citation>
    <scope>NUCLEOTIDE SEQUENCE [LARGE SCALE MRNA]</scope>
    <source>
        <tissue>Embryo</tissue>
    </source>
</reference>
<name>GAMTA_XENLA</name>
<dbReference type="EC" id="2.1.1.2"/>
<dbReference type="EMBL" id="BC045001">
    <property type="protein sequence ID" value="AAH45001.1"/>
    <property type="molecule type" value="mRNA"/>
</dbReference>
<dbReference type="RefSeq" id="NP_001080692.1">
    <property type="nucleotide sequence ID" value="NM_001087223.1"/>
</dbReference>
<dbReference type="SMR" id="Q7ZXG7"/>
<dbReference type="DNASU" id="380384"/>
<dbReference type="GeneID" id="380384"/>
<dbReference type="KEGG" id="xla:380384"/>
<dbReference type="AGR" id="Xenbase:XB-GENE-6256537"/>
<dbReference type="CTD" id="380384"/>
<dbReference type="Xenbase" id="XB-GENE-6256537">
    <property type="gene designation" value="gamt.S"/>
</dbReference>
<dbReference type="OMA" id="HKMITPT"/>
<dbReference type="OrthoDB" id="19014at2759"/>
<dbReference type="UniPathway" id="UPA00104">
    <property type="reaction ID" value="UER00580"/>
</dbReference>
<dbReference type="Proteomes" id="UP000186698">
    <property type="component" value="Chromosome 1S"/>
</dbReference>
<dbReference type="Bgee" id="380384">
    <property type="expression patterns" value="Expressed in kidney and 19 other cell types or tissues"/>
</dbReference>
<dbReference type="GO" id="GO:0005737">
    <property type="term" value="C:cytoplasm"/>
    <property type="evidence" value="ECO:0000318"/>
    <property type="project" value="GO_Central"/>
</dbReference>
<dbReference type="GO" id="GO:0005634">
    <property type="term" value="C:nucleus"/>
    <property type="evidence" value="ECO:0000318"/>
    <property type="project" value="GO_Central"/>
</dbReference>
<dbReference type="GO" id="GO:0030731">
    <property type="term" value="F:guanidinoacetate N-methyltransferase activity"/>
    <property type="evidence" value="ECO:0000318"/>
    <property type="project" value="GO_Central"/>
</dbReference>
<dbReference type="GO" id="GO:0006601">
    <property type="term" value="P:creatine biosynthetic process"/>
    <property type="evidence" value="ECO:0000318"/>
    <property type="project" value="GO_Central"/>
</dbReference>
<dbReference type="GO" id="GO:0032259">
    <property type="term" value="P:methylation"/>
    <property type="evidence" value="ECO:0007669"/>
    <property type="project" value="UniProtKB-KW"/>
</dbReference>
<dbReference type="CDD" id="cd02440">
    <property type="entry name" value="AdoMet_MTases"/>
    <property type="match status" value="1"/>
</dbReference>
<dbReference type="FunFam" id="3.40.50.150:FF:000096">
    <property type="entry name" value="Guanidinoacetate N-methyltransferase"/>
    <property type="match status" value="1"/>
</dbReference>
<dbReference type="Gene3D" id="3.40.50.150">
    <property type="entry name" value="Vaccinia Virus protein VP39"/>
    <property type="match status" value="1"/>
</dbReference>
<dbReference type="InterPro" id="IPR016550">
    <property type="entry name" value="GuanidinoAc_N-MeTrfase"/>
</dbReference>
<dbReference type="InterPro" id="IPR051038">
    <property type="entry name" value="RMT2/GAMT_Mtase"/>
</dbReference>
<dbReference type="InterPro" id="IPR026480">
    <property type="entry name" value="RMT2_dom"/>
</dbReference>
<dbReference type="InterPro" id="IPR029063">
    <property type="entry name" value="SAM-dependent_MTases_sf"/>
</dbReference>
<dbReference type="PANTHER" id="PTHR32379">
    <property type="entry name" value="GUANIDINOACETATE N-METHYLTRANSFERASE"/>
    <property type="match status" value="1"/>
</dbReference>
<dbReference type="PANTHER" id="PTHR32379:SF1">
    <property type="entry name" value="GUANIDINOACETATE N-METHYLTRANSFERASE"/>
    <property type="match status" value="1"/>
</dbReference>
<dbReference type="PIRSF" id="PIRSF009285">
    <property type="entry name" value="GAMT"/>
    <property type="match status" value="1"/>
</dbReference>
<dbReference type="SUPFAM" id="SSF53335">
    <property type="entry name" value="S-adenosyl-L-methionine-dependent methyltransferases"/>
    <property type="match status" value="1"/>
</dbReference>
<dbReference type="PROSITE" id="PS51559">
    <property type="entry name" value="SAM_RMT2"/>
    <property type="match status" value="1"/>
</dbReference>